<keyword id="KW-0249">Electron transport</keyword>
<keyword id="KW-0349">Heme</keyword>
<keyword id="KW-0408">Iron</keyword>
<keyword id="KW-0472">Membrane</keyword>
<keyword id="KW-0479">Metal-binding</keyword>
<keyword id="KW-0496">Mitochondrion</keyword>
<keyword id="KW-0999">Mitochondrion inner membrane</keyword>
<keyword id="KW-0679">Respiratory chain</keyword>
<keyword id="KW-0812">Transmembrane</keyword>
<keyword id="KW-1133">Transmembrane helix</keyword>
<keyword id="KW-0813">Transport</keyword>
<keyword id="KW-0830">Ubiquinone</keyword>
<dbReference type="EMBL" id="X82301">
    <property type="protein sequence ID" value="CAA57744.1"/>
    <property type="molecule type" value="Genomic_DNA"/>
</dbReference>
<dbReference type="PIR" id="S58452">
    <property type="entry name" value="S58452"/>
</dbReference>
<dbReference type="SMR" id="P68090"/>
<dbReference type="GO" id="GO:0005743">
    <property type="term" value="C:mitochondrial inner membrane"/>
    <property type="evidence" value="ECO:0007669"/>
    <property type="project" value="UniProtKB-SubCell"/>
</dbReference>
<dbReference type="GO" id="GO:0045275">
    <property type="term" value="C:respiratory chain complex III"/>
    <property type="evidence" value="ECO:0007669"/>
    <property type="project" value="InterPro"/>
</dbReference>
<dbReference type="GO" id="GO:0046872">
    <property type="term" value="F:metal ion binding"/>
    <property type="evidence" value="ECO:0007669"/>
    <property type="project" value="UniProtKB-KW"/>
</dbReference>
<dbReference type="GO" id="GO:0008121">
    <property type="term" value="F:ubiquinol-cytochrome-c reductase activity"/>
    <property type="evidence" value="ECO:0007669"/>
    <property type="project" value="InterPro"/>
</dbReference>
<dbReference type="GO" id="GO:0006122">
    <property type="term" value="P:mitochondrial electron transport, ubiquinol to cytochrome c"/>
    <property type="evidence" value="ECO:0007669"/>
    <property type="project" value="TreeGrafter"/>
</dbReference>
<dbReference type="CDD" id="cd00290">
    <property type="entry name" value="cytochrome_b_C"/>
    <property type="match status" value="1"/>
</dbReference>
<dbReference type="CDD" id="cd00284">
    <property type="entry name" value="Cytochrome_b_N"/>
    <property type="match status" value="1"/>
</dbReference>
<dbReference type="FunFam" id="1.20.810.10:FF:000002">
    <property type="entry name" value="Cytochrome b"/>
    <property type="match status" value="1"/>
</dbReference>
<dbReference type="Gene3D" id="1.20.810.10">
    <property type="entry name" value="Cytochrome Bc1 Complex, Chain C"/>
    <property type="match status" value="1"/>
</dbReference>
<dbReference type="InterPro" id="IPR005798">
    <property type="entry name" value="Cyt_b/b6_C"/>
</dbReference>
<dbReference type="InterPro" id="IPR036150">
    <property type="entry name" value="Cyt_b/b6_C_sf"/>
</dbReference>
<dbReference type="InterPro" id="IPR005797">
    <property type="entry name" value="Cyt_b/b6_N"/>
</dbReference>
<dbReference type="InterPro" id="IPR027387">
    <property type="entry name" value="Cytb/b6-like_sf"/>
</dbReference>
<dbReference type="InterPro" id="IPR030689">
    <property type="entry name" value="Cytochrome_b"/>
</dbReference>
<dbReference type="InterPro" id="IPR048260">
    <property type="entry name" value="Cytochrome_b_C_euk/bac"/>
</dbReference>
<dbReference type="InterPro" id="IPR048259">
    <property type="entry name" value="Cytochrome_b_N_euk/bac"/>
</dbReference>
<dbReference type="InterPro" id="IPR016174">
    <property type="entry name" value="Di-haem_cyt_TM"/>
</dbReference>
<dbReference type="PANTHER" id="PTHR19271">
    <property type="entry name" value="CYTOCHROME B"/>
    <property type="match status" value="1"/>
</dbReference>
<dbReference type="PANTHER" id="PTHR19271:SF16">
    <property type="entry name" value="CYTOCHROME B"/>
    <property type="match status" value="1"/>
</dbReference>
<dbReference type="Pfam" id="PF00032">
    <property type="entry name" value="Cytochrom_B_C"/>
    <property type="match status" value="1"/>
</dbReference>
<dbReference type="Pfam" id="PF00033">
    <property type="entry name" value="Cytochrome_B"/>
    <property type="match status" value="1"/>
</dbReference>
<dbReference type="PIRSF" id="PIRSF038885">
    <property type="entry name" value="COB"/>
    <property type="match status" value="1"/>
</dbReference>
<dbReference type="SUPFAM" id="SSF81648">
    <property type="entry name" value="a domain/subunit of cytochrome bc1 complex (Ubiquinol-cytochrome c reductase)"/>
    <property type="match status" value="1"/>
</dbReference>
<dbReference type="SUPFAM" id="SSF81342">
    <property type="entry name" value="Transmembrane di-heme cytochromes"/>
    <property type="match status" value="1"/>
</dbReference>
<dbReference type="PROSITE" id="PS51003">
    <property type="entry name" value="CYTB_CTER"/>
    <property type="match status" value="1"/>
</dbReference>
<dbReference type="PROSITE" id="PS51002">
    <property type="entry name" value="CYTB_NTER"/>
    <property type="match status" value="1"/>
</dbReference>
<protein>
    <recommendedName>
        <fullName>Cytochrome b</fullName>
    </recommendedName>
    <alternativeName>
        <fullName>Complex III subunit 3</fullName>
    </alternativeName>
    <alternativeName>
        <fullName>Complex III subunit III</fullName>
    </alternativeName>
    <alternativeName>
        <fullName>Cytochrome b-c1 complex subunit 3</fullName>
    </alternativeName>
    <alternativeName>
        <fullName>Ubiquinol-cytochrome-c reductase complex cytochrome b subunit</fullName>
    </alternativeName>
</protein>
<sequence length="379" mass="42615">MTNIRKSHPLIKIINHSFIDLPAPSNISAWWNFGSLLGVCLILQILTGLFLAMHYTSDTMTAFSSVTHICRDVNYGWIIRYLHANGASMFFICLYMHVGRGMYYGSYTFSETWNIGIVLLFTVMATAFMGYVLPWGQMSFWGATVITNLLSAIPYIGTDLVEWIWGGFSVDKATLTRFFAFHFTLPFIVSALAAVHLLFLHETGSNNPSGMVSDSDKIPFHPYYTIKDILGLLVLVLTLMLLVLFSPDLLGDPDNYIPANPLNTPPHIKPEWYFLFAYAILRSIPNKLGGVLALVLSILILAIIPALHTSKQRGMMFRPLSQCLFWLLVADLLTLTWIGGQPVEHPFIAIGQLASILYFFILLVLMPISGIIENRLLKW</sequence>
<reference key="1">
    <citation type="journal article" date="1995" name="J. Mol. Evol.">
        <title>A molecular view of pinniped relationships with particular emphasis on the true seals.</title>
        <authorList>
            <person name="Arnason U."/>
            <person name="Bodin K."/>
            <person name="Gullberg A."/>
            <person name="Ledje C."/>
            <person name="Mouchaty S."/>
        </authorList>
    </citation>
    <scope>NUCLEOTIDE SEQUENCE [GENOMIC DNA]</scope>
</reference>
<gene>
    <name type="primary">MT-CYB</name>
    <name type="synonym">COB</name>
    <name type="synonym">CYTB</name>
    <name type="synonym">MTCYB</name>
</gene>
<organism>
    <name type="scientific">Panthera tigris</name>
    <name type="common">Tiger</name>
    <dbReference type="NCBI Taxonomy" id="9694"/>
    <lineage>
        <taxon>Eukaryota</taxon>
        <taxon>Metazoa</taxon>
        <taxon>Chordata</taxon>
        <taxon>Craniata</taxon>
        <taxon>Vertebrata</taxon>
        <taxon>Euteleostomi</taxon>
        <taxon>Mammalia</taxon>
        <taxon>Eutheria</taxon>
        <taxon>Laurasiatheria</taxon>
        <taxon>Carnivora</taxon>
        <taxon>Feliformia</taxon>
        <taxon>Felidae</taxon>
        <taxon>Pantherinae</taxon>
        <taxon>Panthera</taxon>
    </lineage>
</organism>
<geneLocation type="mitochondrion"/>
<proteinExistence type="inferred from homology"/>
<accession>P68090</accession>
<accession>Q35655</accession>
<evidence type="ECO:0000250" key="1"/>
<evidence type="ECO:0000250" key="2">
    <source>
        <dbReference type="UniProtKB" id="P00157"/>
    </source>
</evidence>
<evidence type="ECO:0000255" key="3">
    <source>
        <dbReference type="PROSITE-ProRule" id="PRU00967"/>
    </source>
</evidence>
<evidence type="ECO:0000255" key="4">
    <source>
        <dbReference type="PROSITE-ProRule" id="PRU00968"/>
    </source>
</evidence>
<feature type="chain" id="PRO_0000061342" description="Cytochrome b">
    <location>
        <begin position="1"/>
        <end position="379"/>
    </location>
</feature>
<feature type="transmembrane region" description="Helical" evidence="2">
    <location>
        <begin position="33"/>
        <end position="53"/>
    </location>
</feature>
<feature type="transmembrane region" description="Helical" evidence="2">
    <location>
        <begin position="77"/>
        <end position="98"/>
    </location>
</feature>
<feature type="transmembrane region" description="Helical" evidence="2">
    <location>
        <begin position="113"/>
        <end position="133"/>
    </location>
</feature>
<feature type="transmembrane region" description="Helical" evidence="2">
    <location>
        <begin position="178"/>
        <end position="198"/>
    </location>
</feature>
<feature type="transmembrane region" description="Helical" evidence="2">
    <location>
        <begin position="226"/>
        <end position="246"/>
    </location>
</feature>
<feature type="transmembrane region" description="Helical" evidence="2">
    <location>
        <begin position="288"/>
        <end position="308"/>
    </location>
</feature>
<feature type="transmembrane region" description="Helical" evidence="2">
    <location>
        <begin position="320"/>
        <end position="340"/>
    </location>
</feature>
<feature type="transmembrane region" description="Helical" evidence="2">
    <location>
        <begin position="347"/>
        <end position="367"/>
    </location>
</feature>
<feature type="binding site" description="axial binding residue" evidence="2">
    <location>
        <position position="83"/>
    </location>
    <ligand>
        <name>heme b</name>
        <dbReference type="ChEBI" id="CHEBI:60344"/>
        <label>b562</label>
    </ligand>
    <ligandPart>
        <name>Fe</name>
        <dbReference type="ChEBI" id="CHEBI:18248"/>
    </ligandPart>
</feature>
<feature type="binding site" description="axial binding residue" evidence="2">
    <location>
        <position position="97"/>
    </location>
    <ligand>
        <name>heme b</name>
        <dbReference type="ChEBI" id="CHEBI:60344"/>
        <label>b566</label>
    </ligand>
    <ligandPart>
        <name>Fe</name>
        <dbReference type="ChEBI" id="CHEBI:18248"/>
    </ligandPart>
</feature>
<feature type="binding site" description="axial binding residue" evidence="2">
    <location>
        <position position="182"/>
    </location>
    <ligand>
        <name>heme b</name>
        <dbReference type="ChEBI" id="CHEBI:60344"/>
        <label>b562</label>
    </ligand>
    <ligandPart>
        <name>Fe</name>
        <dbReference type="ChEBI" id="CHEBI:18248"/>
    </ligandPart>
</feature>
<feature type="binding site" description="axial binding residue" evidence="2">
    <location>
        <position position="196"/>
    </location>
    <ligand>
        <name>heme b</name>
        <dbReference type="ChEBI" id="CHEBI:60344"/>
        <label>b566</label>
    </ligand>
    <ligandPart>
        <name>Fe</name>
        <dbReference type="ChEBI" id="CHEBI:18248"/>
    </ligandPart>
</feature>
<feature type="binding site" evidence="2">
    <location>
        <position position="201"/>
    </location>
    <ligand>
        <name>a ubiquinone</name>
        <dbReference type="ChEBI" id="CHEBI:16389"/>
    </ligand>
</feature>
<name>CYB_PANTI</name>
<comment type="function">
    <text evidence="2">Component of the ubiquinol-cytochrome c reductase complex (complex III or cytochrome b-c1 complex) that is part of the mitochondrial respiratory chain. The b-c1 complex mediates electron transfer from ubiquinol to cytochrome c. Contributes to the generation of a proton gradient across the mitochondrial membrane that is then used for ATP synthesis.</text>
</comment>
<comment type="cofactor">
    <cofactor evidence="2">
        <name>heme b</name>
        <dbReference type="ChEBI" id="CHEBI:60344"/>
    </cofactor>
    <text evidence="2">Binds 2 heme b groups non-covalently.</text>
</comment>
<comment type="subunit">
    <text evidence="2">The cytochrome bc1 complex contains 11 subunits: 3 respiratory subunits (MT-CYB, CYC1 and UQCRFS1), 2 core proteins (UQCRC1 and UQCRC2) and 6 low-molecular weight proteins (UQCRH/QCR6, UQCRB/QCR7, UQCRQ/QCR8, UQCR10/QCR9, UQCR11/QCR10 and a cleavage product of UQCRFS1). This cytochrome bc1 complex then forms a dimer.</text>
</comment>
<comment type="subcellular location">
    <subcellularLocation>
        <location evidence="2">Mitochondrion inner membrane</location>
        <topology evidence="2">Multi-pass membrane protein</topology>
    </subcellularLocation>
</comment>
<comment type="miscellaneous">
    <text evidence="1">Heme 1 (or BL or b562) is low-potential and absorbs at about 562 nm, and heme 2 (or BH or b566) is high-potential and absorbs at about 566 nm.</text>
</comment>
<comment type="similarity">
    <text evidence="3 4">Belongs to the cytochrome b family.</text>
</comment>
<comment type="caution">
    <text evidence="2">The full-length protein contains only eight transmembrane helices, not nine as predicted by bioinformatics tools.</text>
</comment>